<protein>
    <recommendedName>
        <fullName evidence="1">Ribosomal RNA small subunit methyltransferase H</fullName>
        <ecNumber evidence="1">2.1.1.199</ecNumber>
    </recommendedName>
    <alternativeName>
        <fullName evidence="1">16S rRNA m(4)C1402 methyltransferase</fullName>
    </alternativeName>
    <alternativeName>
        <fullName evidence="1">rRNA (cytosine-N(4)-)-methyltransferase RsmH</fullName>
    </alternativeName>
</protein>
<gene>
    <name evidence="1" type="primary">rsmH</name>
    <name type="synonym">mraW</name>
    <name type="ordered locus">CBO1454</name>
    <name type="ordered locus">CLC_1491</name>
</gene>
<comment type="function">
    <text evidence="1">Specifically methylates the N4 position of cytidine in position 1402 (C1402) of 16S rRNA.</text>
</comment>
<comment type="catalytic activity">
    <reaction evidence="1">
        <text>cytidine(1402) in 16S rRNA + S-adenosyl-L-methionine = N(4)-methylcytidine(1402) in 16S rRNA + S-adenosyl-L-homocysteine + H(+)</text>
        <dbReference type="Rhea" id="RHEA:42928"/>
        <dbReference type="Rhea" id="RHEA-COMP:10286"/>
        <dbReference type="Rhea" id="RHEA-COMP:10287"/>
        <dbReference type="ChEBI" id="CHEBI:15378"/>
        <dbReference type="ChEBI" id="CHEBI:57856"/>
        <dbReference type="ChEBI" id="CHEBI:59789"/>
        <dbReference type="ChEBI" id="CHEBI:74506"/>
        <dbReference type="ChEBI" id="CHEBI:82748"/>
        <dbReference type="EC" id="2.1.1.199"/>
    </reaction>
</comment>
<comment type="subcellular location">
    <subcellularLocation>
        <location evidence="1">Cytoplasm</location>
    </subcellularLocation>
</comment>
<comment type="similarity">
    <text evidence="1">Belongs to the methyltransferase superfamily. RsmH family.</text>
</comment>
<feature type="chain" id="PRO_0000386814" description="Ribosomal RNA small subunit methyltransferase H">
    <location>
        <begin position="1"/>
        <end position="309"/>
    </location>
</feature>
<feature type="binding site" evidence="1">
    <location>
        <begin position="33"/>
        <end position="35"/>
    </location>
    <ligand>
        <name>S-adenosyl-L-methionine</name>
        <dbReference type="ChEBI" id="CHEBI:59789"/>
    </ligand>
</feature>
<feature type="binding site" evidence="1">
    <location>
        <position position="53"/>
    </location>
    <ligand>
        <name>S-adenosyl-L-methionine</name>
        <dbReference type="ChEBI" id="CHEBI:59789"/>
    </ligand>
</feature>
<feature type="binding site" evidence="1">
    <location>
        <position position="79"/>
    </location>
    <ligand>
        <name>S-adenosyl-L-methionine</name>
        <dbReference type="ChEBI" id="CHEBI:59789"/>
    </ligand>
</feature>
<feature type="binding site" evidence="1">
    <location>
        <position position="100"/>
    </location>
    <ligand>
        <name>S-adenosyl-L-methionine</name>
        <dbReference type="ChEBI" id="CHEBI:59789"/>
    </ligand>
</feature>
<feature type="binding site" evidence="1">
    <location>
        <position position="107"/>
    </location>
    <ligand>
        <name>S-adenosyl-L-methionine</name>
        <dbReference type="ChEBI" id="CHEBI:59789"/>
    </ligand>
</feature>
<evidence type="ECO:0000255" key="1">
    <source>
        <dbReference type="HAMAP-Rule" id="MF_01007"/>
    </source>
</evidence>
<name>RSMH_CLOBH</name>
<dbReference type="EC" id="2.1.1.199" evidence="1"/>
<dbReference type="EMBL" id="CP000727">
    <property type="protein sequence ID" value="ABS37012.1"/>
    <property type="molecule type" value="Genomic_DNA"/>
</dbReference>
<dbReference type="EMBL" id="AM412317">
    <property type="protein sequence ID" value="CAL82997.1"/>
    <property type="molecule type" value="Genomic_DNA"/>
</dbReference>
<dbReference type="RefSeq" id="WP_011949033.1">
    <property type="nucleotide sequence ID" value="NC_009698.1"/>
</dbReference>
<dbReference type="RefSeq" id="YP_001253967.1">
    <property type="nucleotide sequence ID" value="NC_009495.1"/>
</dbReference>
<dbReference type="RefSeq" id="YP_001387355.1">
    <property type="nucleotide sequence ID" value="NC_009698.1"/>
</dbReference>
<dbReference type="SMR" id="A5I1T3"/>
<dbReference type="GeneID" id="5185709"/>
<dbReference type="KEGG" id="cbh:CLC_1491"/>
<dbReference type="KEGG" id="cbo:CBO1454"/>
<dbReference type="PATRIC" id="fig|413999.7.peg.1434"/>
<dbReference type="HOGENOM" id="CLU_038422_2_0_9"/>
<dbReference type="PRO" id="PR:A5I1T3"/>
<dbReference type="Proteomes" id="UP000001986">
    <property type="component" value="Chromosome"/>
</dbReference>
<dbReference type="GO" id="GO:0005737">
    <property type="term" value="C:cytoplasm"/>
    <property type="evidence" value="ECO:0000318"/>
    <property type="project" value="GO_Central"/>
</dbReference>
<dbReference type="GO" id="GO:0071424">
    <property type="term" value="F:rRNA (cytosine-N4-)-methyltransferase activity"/>
    <property type="evidence" value="ECO:0000318"/>
    <property type="project" value="GO_Central"/>
</dbReference>
<dbReference type="GO" id="GO:0070475">
    <property type="term" value="P:rRNA base methylation"/>
    <property type="evidence" value="ECO:0000318"/>
    <property type="project" value="GO_Central"/>
</dbReference>
<dbReference type="FunFam" id="1.10.150.170:FF:000001">
    <property type="entry name" value="Ribosomal RNA small subunit methyltransferase H"/>
    <property type="match status" value="1"/>
</dbReference>
<dbReference type="Gene3D" id="1.10.150.170">
    <property type="entry name" value="Putative methyltransferase TM0872, insert domain"/>
    <property type="match status" value="1"/>
</dbReference>
<dbReference type="Gene3D" id="3.40.50.150">
    <property type="entry name" value="Vaccinia Virus protein VP39"/>
    <property type="match status" value="1"/>
</dbReference>
<dbReference type="HAMAP" id="MF_01007">
    <property type="entry name" value="16SrRNA_methyltr_H"/>
    <property type="match status" value="1"/>
</dbReference>
<dbReference type="InterPro" id="IPR002903">
    <property type="entry name" value="RsmH"/>
</dbReference>
<dbReference type="InterPro" id="IPR023397">
    <property type="entry name" value="SAM-dep_MeTrfase_MraW_recog"/>
</dbReference>
<dbReference type="InterPro" id="IPR029063">
    <property type="entry name" value="SAM-dependent_MTases_sf"/>
</dbReference>
<dbReference type="NCBIfam" id="TIGR00006">
    <property type="entry name" value="16S rRNA (cytosine(1402)-N(4))-methyltransferase RsmH"/>
    <property type="match status" value="1"/>
</dbReference>
<dbReference type="PANTHER" id="PTHR11265:SF0">
    <property type="entry name" value="12S RRNA N4-METHYLCYTIDINE METHYLTRANSFERASE"/>
    <property type="match status" value="1"/>
</dbReference>
<dbReference type="PANTHER" id="PTHR11265">
    <property type="entry name" value="S-ADENOSYL-METHYLTRANSFERASE MRAW"/>
    <property type="match status" value="1"/>
</dbReference>
<dbReference type="Pfam" id="PF01795">
    <property type="entry name" value="Methyltransf_5"/>
    <property type="match status" value="1"/>
</dbReference>
<dbReference type="PIRSF" id="PIRSF004486">
    <property type="entry name" value="MraW"/>
    <property type="match status" value="1"/>
</dbReference>
<dbReference type="SUPFAM" id="SSF81799">
    <property type="entry name" value="Putative methyltransferase TM0872, insert domain"/>
    <property type="match status" value="1"/>
</dbReference>
<dbReference type="SUPFAM" id="SSF53335">
    <property type="entry name" value="S-adenosyl-L-methionine-dependent methyltransferases"/>
    <property type="match status" value="1"/>
</dbReference>
<sequence length="309" mass="35491">MEFKHISVLLEETIDSLNIKEDGVYVDCTLGGGGHSKEILKKLSHKGKLIGIDQDTSAIKAAKERLKDYENVIYVHNNFYNIDSILEELDIDKVDGIIMDLGVSSYQLDEASRGFSYMKDAPLDMRMNREENLSAYGVINNYEEEELFKILKNYGEEKFSRKIARFIVEKRTENPIETTGELVEIIRKAIPAKFQREGHPAKRTFQAIRIEVNKELQILNKAIEDSVNRLNKDGRLSIITFHSLEDRIVKVKFKELEKPCTCPPSFPICVCGKEPQIKIITKKPIEPSKEEKEINSRSRSAKLRVCRKI</sequence>
<reference key="1">
    <citation type="journal article" date="2007" name="Genome Res.">
        <title>Genome sequence of a proteolytic (Group I) Clostridium botulinum strain Hall A and comparative analysis of the clostridial genomes.</title>
        <authorList>
            <person name="Sebaihia M."/>
            <person name="Peck M.W."/>
            <person name="Minton N.P."/>
            <person name="Thomson N.R."/>
            <person name="Holden M.T.G."/>
            <person name="Mitchell W.J."/>
            <person name="Carter A.T."/>
            <person name="Bentley S.D."/>
            <person name="Mason D.R."/>
            <person name="Crossman L."/>
            <person name="Paul C.J."/>
            <person name="Ivens A."/>
            <person name="Wells-Bennik M.H.J."/>
            <person name="Davis I.J."/>
            <person name="Cerdeno-Tarraga A.M."/>
            <person name="Churcher C."/>
            <person name="Quail M.A."/>
            <person name="Chillingworth T."/>
            <person name="Feltwell T."/>
            <person name="Fraser A."/>
            <person name="Goodhead I."/>
            <person name="Hance Z."/>
            <person name="Jagels K."/>
            <person name="Larke N."/>
            <person name="Maddison M."/>
            <person name="Moule S."/>
            <person name="Mungall K."/>
            <person name="Norbertczak H."/>
            <person name="Rabbinowitsch E."/>
            <person name="Sanders M."/>
            <person name="Simmonds M."/>
            <person name="White B."/>
            <person name="Whithead S."/>
            <person name="Parkhill J."/>
        </authorList>
    </citation>
    <scope>NUCLEOTIDE SEQUENCE [LARGE SCALE GENOMIC DNA]</scope>
    <source>
        <strain>Hall / ATCC 3502 / NCTC 13319 / Type A</strain>
    </source>
</reference>
<reference key="2">
    <citation type="journal article" date="2007" name="PLoS ONE">
        <title>Analysis of the neurotoxin complex genes in Clostridium botulinum A1-A4 and B1 strains: BoNT/A3, /Ba4 and /B1 clusters are located within plasmids.</title>
        <authorList>
            <person name="Smith T.J."/>
            <person name="Hill K.K."/>
            <person name="Foley B.T."/>
            <person name="Detter J.C."/>
            <person name="Munk A.C."/>
            <person name="Bruce D.C."/>
            <person name="Doggett N.A."/>
            <person name="Smith L.A."/>
            <person name="Marks J.D."/>
            <person name="Xie G."/>
            <person name="Brettin T.S."/>
        </authorList>
    </citation>
    <scope>NUCLEOTIDE SEQUENCE [LARGE SCALE GENOMIC DNA]</scope>
    <source>
        <strain>Hall / ATCC 3502 / NCTC 13319 / Type A</strain>
    </source>
</reference>
<accession>A5I1T3</accession>
<accession>A7G3J0</accession>
<organism>
    <name type="scientific">Clostridium botulinum (strain Hall / ATCC 3502 / NCTC 13319 / Type A)</name>
    <dbReference type="NCBI Taxonomy" id="441771"/>
    <lineage>
        <taxon>Bacteria</taxon>
        <taxon>Bacillati</taxon>
        <taxon>Bacillota</taxon>
        <taxon>Clostridia</taxon>
        <taxon>Eubacteriales</taxon>
        <taxon>Clostridiaceae</taxon>
        <taxon>Clostridium</taxon>
    </lineage>
</organism>
<proteinExistence type="inferred from homology"/>
<keyword id="KW-0963">Cytoplasm</keyword>
<keyword id="KW-0489">Methyltransferase</keyword>
<keyword id="KW-1185">Reference proteome</keyword>
<keyword id="KW-0698">rRNA processing</keyword>
<keyword id="KW-0949">S-adenosyl-L-methionine</keyword>
<keyword id="KW-0808">Transferase</keyword>